<keyword id="KW-0963">Cytoplasm</keyword>
<keyword id="KW-0690">Ribosome biogenesis</keyword>
<proteinExistence type="inferred from homology"/>
<protein>
    <recommendedName>
        <fullName evidence="1">Ribosome-binding factor A</fullName>
    </recommendedName>
</protein>
<dbReference type="EMBL" id="CP000323">
    <property type="protein sequence ID" value="ABE73859.1"/>
    <property type="molecule type" value="Genomic_DNA"/>
</dbReference>
<dbReference type="RefSeq" id="WP_011512450.1">
    <property type="nucleotide sequence ID" value="NC_007969.1"/>
</dbReference>
<dbReference type="SMR" id="Q1QEP4"/>
<dbReference type="STRING" id="335284.Pcryo_0075"/>
<dbReference type="KEGG" id="pcr:Pcryo_0075"/>
<dbReference type="eggNOG" id="COG0858">
    <property type="taxonomic scope" value="Bacteria"/>
</dbReference>
<dbReference type="HOGENOM" id="CLU_089475_5_0_6"/>
<dbReference type="Proteomes" id="UP000002425">
    <property type="component" value="Chromosome"/>
</dbReference>
<dbReference type="GO" id="GO:0005829">
    <property type="term" value="C:cytosol"/>
    <property type="evidence" value="ECO:0007669"/>
    <property type="project" value="TreeGrafter"/>
</dbReference>
<dbReference type="GO" id="GO:0043024">
    <property type="term" value="F:ribosomal small subunit binding"/>
    <property type="evidence" value="ECO:0007669"/>
    <property type="project" value="TreeGrafter"/>
</dbReference>
<dbReference type="GO" id="GO:0030490">
    <property type="term" value="P:maturation of SSU-rRNA"/>
    <property type="evidence" value="ECO:0007669"/>
    <property type="project" value="UniProtKB-UniRule"/>
</dbReference>
<dbReference type="Gene3D" id="3.30.300.20">
    <property type="match status" value="1"/>
</dbReference>
<dbReference type="HAMAP" id="MF_00003">
    <property type="entry name" value="RbfA"/>
    <property type="match status" value="1"/>
</dbReference>
<dbReference type="InterPro" id="IPR015946">
    <property type="entry name" value="KH_dom-like_a/b"/>
</dbReference>
<dbReference type="InterPro" id="IPR000238">
    <property type="entry name" value="RbfA"/>
</dbReference>
<dbReference type="InterPro" id="IPR023799">
    <property type="entry name" value="RbfA_dom_sf"/>
</dbReference>
<dbReference type="NCBIfam" id="NF010389">
    <property type="entry name" value="PRK13816.1"/>
    <property type="match status" value="1"/>
</dbReference>
<dbReference type="NCBIfam" id="TIGR00082">
    <property type="entry name" value="rbfA"/>
    <property type="match status" value="1"/>
</dbReference>
<dbReference type="PANTHER" id="PTHR33515">
    <property type="entry name" value="RIBOSOME-BINDING FACTOR A, CHLOROPLASTIC-RELATED"/>
    <property type="match status" value="1"/>
</dbReference>
<dbReference type="PANTHER" id="PTHR33515:SF1">
    <property type="entry name" value="RIBOSOME-BINDING FACTOR A, CHLOROPLASTIC-RELATED"/>
    <property type="match status" value="1"/>
</dbReference>
<dbReference type="Pfam" id="PF02033">
    <property type="entry name" value="RBFA"/>
    <property type="match status" value="1"/>
</dbReference>
<dbReference type="SUPFAM" id="SSF89919">
    <property type="entry name" value="Ribosome-binding factor A, RbfA"/>
    <property type="match status" value="1"/>
</dbReference>
<feature type="chain" id="PRO_0000321241" description="Ribosome-binding factor A">
    <location>
        <begin position="1"/>
        <end position="134"/>
    </location>
</feature>
<sequence length="134" mass="15358">MNQRLQRLADQIQRELAVLIRDAVNDPRLTGFVTISSIKVSPDLGYADVYVTIMEPELNDAMTMSNHEESIKVLNKAAGFLRTELSHSLKTRTTPRLRFHYDEVTARGNYMMDLISKAVIKTEENESDEQENEE</sequence>
<organism>
    <name type="scientific">Psychrobacter cryohalolentis (strain ATCC BAA-1226 / DSM 17306 / VKM B-2378 / K5)</name>
    <dbReference type="NCBI Taxonomy" id="335284"/>
    <lineage>
        <taxon>Bacteria</taxon>
        <taxon>Pseudomonadati</taxon>
        <taxon>Pseudomonadota</taxon>
        <taxon>Gammaproteobacteria</taxon>
        <taxon>Moraxellales</taxon>
        <taxon>Moraxellaceae</taxon>
        <taxon>Psychrobacter</taxon>
    </lineage>
</organism>
<accession>Q1QEP4</accession>
<gene>
    <name evidence="1" type="primary">rbfA</name>
    <name type="ordered locus">Pcryo_0075</name>
</gene>
<evidence type="ECO:0000255" key="1">
    <source>
        <dbReference type="HAMAP-Rule" id="MF_00003"/>
    </source>
</evidence>
<comment type="function">
    <text evidence="1">One of several proteins that assist in the late maturation steps of the functional core of the 30S ribosomal subunit. Associates with free 30S ribosomal subunits (but not with 30S subunits that are part of 70S ribosomes or polysomes). Required for efficient processing of 16S rRNA. May interact with the 5'-terminal helix region of 16S rRNA.</text>
</comment>
<comment type="subunit">
    <text evidence="1">Monomer. Binds 30S ribosomal subunits, but not 50S ribosomal subunits or 70S ribosomes.</text>
</comment>
<comment type="subcellular location">
    <subcellularLocation>
        <location evidence="1">Cytoplasm</location>
    </subcellularLocation>
</comment>
<comment type="similarity">
    <text evidence="1">Belongs to the RbfA family.</text>
</comment>
<name>RBFA_PSYCK</name>
<reference key="1">
    <citation type="submission" date="2006-03" db="EMBL/GenBank/DDBJ databases">
        <title>Complete sequence of chromosome of Psychrobacter cryohalolentis K5.</title>
        <authorList>
            <consortium name="US DOE Joint Genome Institute"/>
            <person name="Copeland A."/>
            <person name="Lucas S."/>
            <person name="Lapidus A."/>
            <person name="Barry K."/>
            <person name="Detter J.C."/>
            <person name="Glavina T."/>
            <person name="Hammon N."/>
            <person name="Israni S."/>
            <person name="Dalin E."/>
            <person name="Tice H."/>
            <person name="Pitluck S."/>
            <person name="Brettin T."/>
            <person name="Bruce D."/>
            <person name="Han C."/>
            <person name="Tapia R."/>
            <person name="Sims D.R."/>
            <person name="Gilna P."/>
            <person name="Schmutz J."/>
            <person name="Larimer F."/>
            <person name="Land M."/>
            <person name="Hauser L."/>
            <person name="Kyrpides N."/>
            <person name="Kim E."/>
            <person name="Richardson P."/>
        </authorList>
    </citation>
    <scope>NUCLEOTIDE SEQUENCE [LARGE SCALE GENOMIC DNA]</scope>
    <source>
        <strain>ATCC BAA-1226 / DSM 17306 / VKM B-2378 / K5</strain>
    </source>
</reference>